<feature type="chain" id="PRO_0000162942" description="Acireductone dioxygenase">
    <location>
        <begin position="1"/>
        <end position="179"/>
    </location>
</feature>
<feature type="region of interest" description="Disordered" evidence="3">
    <location>
        <begin position="7"/>
        <end position="26"/>
    </location>
</feature>
<feature type="binding site" evidence="7">
    <location>
        <position position="88"/>
    </location>
    <ligand>
        <name>Fe(2+)</name>
        <dbReference type="ChEBI" id="CHEBI:29033"/>
        <note>for iron-dependent acireductone dioxygenase activity</note>
    </ligand>
</feature>
<feature type="binding site" evidence="2">
    <location>
        <position position="88"/>
    </location>
    <ligand>
        <name>Ni(2+)</name>
        <dbReference type="ChEBI" id="CHEBI:49786"/>
        <note>for nickel-dependent acireductone dioxygenase activity</note>
    </ligand>
</feature>
<feature type="binding site" evidence="7">
    <location>
        <position position="90"/>
    </location>
    <ligand>
        <name>Fe(2+)</name>
        <dbReference type="ChEBI" id="CHEBI:29033"/>
        <note>for iron-dependent acireductone dioxygenase activity</note>
    </ligand>
</feature>
<feature type="binding site" evidence="2">
    <location>
        <position position="90"/>
    </location>
    <ligand>
        <name>Ni(2+)</name>
        <dbReference type="ChEBI" id="CHEBI:49786"/>
        <note>for nickel-dependent acireductone dioxygenase activity</note>
    </ligand>
</feature>
<feature type="binding site" evidence="7">
    <location>
        <position position="94"/>
    </location>
    <ligand>
        <name>Fe(2+)</name>
        <dbReference type="ChEBI" id="CHEBI:29033"/>
        <note>for iron-dependent acireductone dioxygenase activity</note>
    </ligand>
</feature>
<feature type="binding site" evidence="2">
    <location>
        <position position="94"/>
    </location>
    <ligand>
        <name>Ni(2+)</name>
        <dbReference type="ChEBI" id="CHEBI:49786"/>
        <note>for nickel-dependent acireductone dioxygenase activity</note>
    </ligand>
</feature>
<feature type="binding site" evidence="7">
    <location>
        <position position="133"/>
    </location>
    <ligand>
        <name>Fe(2+)</name>
        <dbReference type="ChEBI" id="CHEBI:29033"/>
        <note>for iron-dependent acireductone dioxygenase activity</note>
    </ligand>
</feature>
<feature type="binding site" evidence="2">
    <location>
        <position position="133"/>
    </location>
    <ligand>
        <name>Ni(2+)</name>
        <dbReference type="ChEBI" id="CHEBI:49786"/>
        <note>for nickel-dependent acireductone dioxygenase activity</note>
    </ligand>
</feature>
<feature type="splice variant" id="VSP_015822" description="In isoform 2." evidence="8">
    <original>MVQAWYMDDAPGDPRQPHRPDPGRPVGLEQLRRLGVLYWK</original>
    <variation>MSVKSSKLMFLCHGSSRSLHSGSLTSCNTGVCCS</variation>
    <location>
        <begin position="1"/>
        <end position="40"/>
    </location>
</feature>
<feature type="mutagenesis site" description="Loss of aci-reductone dioxygenase activity." evidence="6">
    <original>E</original>
    <variation>A</variation>
    <location>
        <position position="94"/>
    </location>
</feature>
<feature type="sequence conflict" description="In Ref. 4; BAA91901." evidence="11" ref="4">
    <original>Q</original>
    <variation>L</variation>
    <location>
        <position position="3"/>
    </location>
</feature>
<feature type="sequence conflict" description="In Ref. 5; BAD96187." evidence="11" ref="5">
    <original>R</original>
    <variation>G</variation>
    <location>
        <position position="108"/>
    </location>
</feature>
<feature type="sequence conflict" description="In Ref. 2; AAP97173." evidence="11" ref="2">
    <original>Q</original>
    <variation>K</variation>
    <location>
        <position position="170"/>
    </location>
</feature>
<feature type="strand" evidence="13">
    <location>
        <begin position="4"/>
        <end position="6"/>
    </location>
</feature>
<feature type="helix" evidence="14">
    <location>
        <begin position="7"/>
        <end position="9"/>
    </location>
</feature>
<feature type="strand" evidence="13">
    <location>
        <begin position="14"/>
        <end position="16"/>
    </location>
</feature>
<feature type="helix" evidence="13">
    <location>
        <begin position="28"/>
        <end position="32"/>
    </location>
</feature>
<feature type="turn" evidence="13">
    <location>
        <begin position="33"/>
        <end position="35"/>
    </location>
</feature>
<feature type="strand" evidence="13">
    <location>
        <begin position="37"/>
        <end position="40"/>
    </location>
</feature>
<feature type="strand" evidence="13">
    <location>
        <begin position="43"/>
        <end position="45"/>
    </location>
</feature>
<feature type="helix" evidence="13">
    <location>
        <begin position="46"/>
        <end position="48"/>
    </location>
</feature>
<feature type="helix" evidence="13">
    <location>
        <begin position="50"/>
        <end position="58"/>
    </location>
</feature>
<feature type="strand" evidence="13">
    <location>
        <begin position="63"/>
        <end position="70"/>
    </location>
</feature>
<feature type="turn" evidence="13">
    <location>
        <begin position="71"/>
        <end position="73"/>
    </location>
</feature>
<feature type="strand" evidence="14">
    <location>
        <begin position="74"/>
        <end position="76"/>
    </location>
</feature>
<feature type="helix" evidence="13">
    <location>
        <begin position="77"/>
        <end position="85"/>
    </location>
</feature>
<feature type="strand" evidence="13">
    <location>
        <begin position="94"/>
        <end position="101"/>
    </location>
</feature>
<feature type="strand" evidence="13">
    <location>
        <begin position="103"/>
        <end position="108"/>
    </location>
</feature>
<feature type="turn" evidence="14">
    <location>
        <begin position="110"/>
        <end position="112"/>
    </location>
</feature>
<feature type="strand" evidence="13">
    <location>
        <begin position="114"/>
        <end position="119"/>
    </location>
</feature>
<feature type="strand" evidence="13">
    <location>
        <begin position="123"/>
        <end position="127"/>
    </location>
</feature>
<feature type="strand" evidence="13">
    <location>
        <begin position="133"/>
        <end position="137"/>
    </location>
</feature>
<feature type="turn" evidence="14">
    <location>
        <begin position="138"/>
        <end position="140"/>
    </location>
</feature>
<feature type="strand" evidence="13">
    <location>
        <begin position="143"/>
        <end position="152"/>
    </location>
</feature>
<feature type="helix" evidence="14">
    <location>
        <begin position="155"/>
        <end position="157"/>
    </location>
</feature>
<feature type="strand" evidence="13">
    <location>
        <begin position="158"/>
        <end position="160"/>
    </location>
</feature>
<feature type="helix" evidence="14">
    <location>
        <begin position="162"/>
        <end position="164"/>
    </location>
</feature>
<feature type="helix" evidence="13">
    <location>
        <begin position="166"/>
        <end position="176"/>
    </location>
</feature>
<accession>Q9BV57</accession>
<accession>D6W4Y3</accession>
<accession>Q53HW3</accession>
<accession>Q53QD3</accession>
<accession>Q57YV7</accession>
<accession>Q68CK2</accession>
<accession>Q6ZSF7</accession>
<accession>Q7Z512</accession>
<accession>Q96P85</accession>
<accession>Q9NV57</accession>
<evidence type="ECO:0000250" key="1">
    <source>
        <dbReference type="UniProtKB" id="Q99JT9"/>
    </source>
</evidence>
<evidence type="ECO:0000255" key="2">
    <source>
        <dbReference type="HAMAP-Rule" id="MF_03154"/>
    </source>
</evidence>
<evidence type="ECO:0000256" key="3">
    <source>
        <dbReference type="SAM" id="MobiDB-lite"/>
    </source>
</evidence>
<evidence type="ECO:0000269" key="4">
    <source>
    </source>
</evidence>
<evidence type="ECO:0000269" key="5">
    <source>
    </source>
</evidence>
<evidence type="ECO:0000269" key="6">
    <source>
    </source>
</evidence>
<evidence type="ECO:0000269" key="7">
    <source ref="14"/>
</evidence>
<evidence type="ECO:0000303" key="8">
    <source>
    </source>
</evidence>
<evidence type="ECO:0000303" key="9">
    <source>
    </source>
</evidence>
<evidence type="ECO:0000303" key="10">
    <source ref="2"/>
</evidence>
<evidence type="ECO:0000305" key="11"/>
<evidence type="ECO:0007744" key="12">
    <source>
        <dbReference type="PDB" id="4QGN"/>
    </source>
</evidence>
<evidence type="ECO:0007829" key="13">
    <source>
        <dbReference type="PDB" id="4QGN"/>
    </source>
</evidence>
<evidence type="ECO:0007829" key="14">
    <source>
        <dbReference type="PDB" id="7JXG"/>
    </source>
</evidence>
<keyword id="KW-0002">3D-structure</keyword>
<keyword id="KW-0025">Alternative splicing</keyword>
<keyword id="KW-0028">Amino-acid biosynthesis</keyword>
<keyword id="KW-1003">Cell membrane</keyword>
<keyword id="KW-0963">Cytoplasm</keyword>
<keyword id="KW-0223">Dioxygenase</keyword>
<keyword id="KW-0903">Direct protein sequencing</keyword>
<keyword id="KW-0408">Iron</keyword>
<keyword id="KW-0472">Membrane</keyword>
<keyword id="KW-0479">Metal-binding</keyword>
<keyword id="KW-0486">Methionine biosynthesis</keyword>
<keyword id="KW-0533">Nickel</keyword>
<keyword id="KW-0539">Nucleus</keyword>
<keyword id="KW-0560">Oxidoreductase</keyword>
<keyword id="KW-1267">Proteomics identification</keyword>
<keyword id="KW-1185">Reference proteome</keyword>
<sequence length="179" mass="21498">MVQAWYMDDAPGDPRQPHRPDPGRPVGLEQLRRLGVLYWKLDADKYENDPELEKIRRERNYSWMDIITICKDKLPNYEEKIKMFYEEHLHLDDEIRYILDGSGYFDVRDKEDQWIRIFMEKGDMVTLPAGIYHRFTVDEKNYTKAMRLFVGEPVWTAYNRPADHFEARGQYVKFLAQTA</sequence>
<reference key="1">
    <citation type="journal article" date="2004" name="J. Biol. Chem.">
        <title>Membrane-type 1 matrix metalloproteinase cytoplasmic tail-binding protein-1 is a new member of the cupin superfamily. A possible multifunctional protein acting as an invasion suppressor down-regulated in tumors.</title>
        <authorList>
            <person name="Uekita T."/>
            <person name="Gotoh I."/>
            <person name="Kinoshita T."/>
            <person name="Itoh Y."/>
            <person name="Sato H."/>
            <person name="Shiomi T."/>
            <person name="Okada Y."/>
            <person name="Seiki M."/>
        </authorList>
    </citation>
    <scope>NUCLEOTIDE SEQUENCE [MRNA] (ISOFORM 1)</scope>
    <scope>FUNCTION</scope>
    <scope>INTERACTION WITH MMP14</scope>
    <scope>SUBCELLULAR LOCATION</scope>
    <scope>TISSUE SPECIFICITY</scope>
    <source>
        <tissue>Fibroblast</tissue>
    </source>
</reference>
<reference key="2">
    <citation type="submission" date="2003-07" db="EMBL/GenBank/DDBJ databases">
        <title>Cloning and expression of a new human cDNA homologous to O.sativa submergence induced protein 2 (sip2) mRNA.</title>
        <authorList>
            <person name="Fan Y.X."/>
            <person name="Yu L."/>
            <person name="Ding J.B."/>
            <person name="Hu P.R."/>
            <person name="Fu S.N."/>
            <person name="Zhao S.Y."/>
        </authorList>
    </citation>
    <scope>NUCLEOTIDE SEQUENCE [MRNA] (ISOFORM 1)</scope>
</reference>
<reference key="3">
    <citation type="journal article" date="2004" name="Oncogene">
        <title>Expression profiling and differential screening between hepatoblastomas and the corresponding normal livers: identification of high expression of the PLK1 oncogene as a poor-prognostic indicator of hepatoblastomas.</title>
        <authorList>
            <person name="Yamada S."/>
            <person name="Ohira M."/>
            <person name="Horie H."/>
            <person name="Ando K."/>
            <person name="Takayasu H."/>
            <person name="Suzuki Y."/>
            <person name="Sugano S."/>
            <person name="Hirata T."/>
            <person name="Goto T."/>
            <person name="Matsunaga T."/>
            <person name="Hiyama E."/>
            <person name="Hayashi Y."/>
            <person name="Ando H."/>
            <person name="Suita S."/>
            <person name="Kaneko M."/>
            <person name="Sasaki F."/>
            <person name="Hashizume K."/>
            <person name="Ohnuma N."/>
            <person name="Nakagawara A."/>
        </authorList>
    </citation>
    <scope>NUCLEOTIDE SEQUENCE [LARGE SCALE MRNA] (ISOFORM 1)</scope>
    <source>
        <tissue>Hepatoblastoma</tissue>
    </source>
</reference>
<reference key="4">
    <citation type="journal article" date="2004" name="Nat. Genet.">
        <title>Complete sequencing and characterization of 21,243 full-length human cDNAs.</title>
        <authorList>
            <person name="Ota T."/>
            <person name="Suzuki Y."/>
            <person name="Nishikawa T."/>
            <person name="Otsuki T."/>
            <person name="Sugiyama T."/>
            <person name="Irie R."/>
            <person name="Wakamatsu A."/>
            <person name="Hayashi K."/>
            <person name="Sato H."/>
            <person name="Nagai K."/>
            <person name="Kimura K."/>
            <person name="Makita H."/>
            <person name="Sekine M."/>
            <person name="Obayashi M."/>
            <person name="Nishi T."/>
            <person name="Shibahara T."/>
            <person name="Tanaka T."/>
            <person name="Ishii S."/>
            <person name="Yamamoto J."/>
            <person name="Saito K."/>
            <person name="Kawai Y."/>
            <person name="Isono Y."/>
            <person name="Nakamura Y."/>
            <person name="Nagahari K."/>
            <person name="Murakami K."/>
            <person name="Yasuda T."/>
            <person name="Iwayanagi T."/>
            <person name="Wagatsuma M."/>
            <person name="Shiratori A."/>
            <person name="Sudo H."/>
            <person name="Hosoiri T."/>
            <person name="Kaku Y."/>
            <person name="Kodaira H."/>
            <person name="Kondo H."/>
            <person name="Sugawara M."/>
            <person name="Takahashi M."/>
            <person name="Kanda K."/>
            <person name="Yokoi T."/>
            <person name="Furuya T."/>
            <person name="Kikkawa E."/>
            <person name="Omura Y."/>
            <person name="Abe K."/>
            <person name="Kamihara K."/>
            <person name="Katsuta N."/>
            <person name="Sato K."/>
            <person name="Tanikawa M."/>
            <person name="Yamazaki M."/>
            <person name="Ninomiya K."/>
            <person name="Ishibashi T."/>
            <person name="Yamashita H."/>
            <person name="Murakawa K."/>
            <person name="Fujimori K."/>
            <person name="Tanai H."/>
            <person name="Kimata M."/>
            <person name="Watanabe M."/>
            <person name="Hiraoka S."/>
            <person name="Chiba Y."/>
            <person name="Ishida S."/>
            <person name="Ono Y."/>
            <person name="Takiguchi S."/>
            <person name="Watanabe S."/>
            <person name="Yosida M."/>
            <person name="Hotuta T."/>
            <person name="Kusano J."/>
            <person name="Kanehori K."/>
            <person name="Takahashi-Fujii A."/>
            <person name="Hara H."/>
            <person name="Tanase T.-O."/>
            <person name="Nomura Y."/>
            <person name="Togiya S."/>
            <person name="Komai F."/>
            <person name="Hara R."/>
            <person name="Takeuchi K."/>
            <person name="Arita M."/>
            <person name="Imose N."/>
            <person name="Musashino K."/>
            <person name="Yuuki H."/>
            <person name="Oshima A."/>
            <person name="Sasaki N."/>
            <person name="Aotsuka S."/>
            <person name="Yoshikawa Y."/>
            <person name="Matsunawa H."/>
            <person name="Ichihara T."/>
            <person name="Shiohata N."/>
            <person name="Sano S."/>
            <person name="Moriya S."/>
            <person name="Momiyama H."/>
            <person name="Satoh N."/>
            <person name="Takami S."/>
            <person name="Terashima Y."/>
            <person name="Suzuki O."/>
            <person name="Nakagawa S."/>
            <person name="Senoh A."/>
            <person name="Mizoguchi H."/>
            <person name="Goto Y."/>
            <person name="Shimizu F."/>
            <person name="Wakebe H."/>
            <person name="Hishigaki H."/>
            <person name="Watanabe T."/>
            <person name="Sugiyama A."/>
            <person name="Takemoto M."/>
            <person name="Kawakami B."/>
            <person name="Yamazaki M."/>
            <person name="Watanabe K."/>
            <person name="Kumagai A."/>
            <person name="Itakura S."/>
            <person name="Fukuzumi Y."/>
            <person name="Fujimori Y."/>
            <person name="Komiyama M."/>
            <person name="Tashiro H."/>
            <person name="Tanigami A."/>
            <person name="Fujiwara T."/>
            <person name="Ono T."/>
            <person name="Yamada K."/>
            <person name="Fujii Y."/>
            <person name="Ozaki K."/>
            <person name="Hirao M."/>
            <person name="Ohmori Y."/>
            <person name="Kawabata A."/>
            <person name="Hikiji T."/>
            <person name="Kobatake N."/>
            <person name="Inagaki H."/>
            <person name="Ikema Y."/>
            <person name="Okamoto S."/>
            <person name="Okitani R."/>
            <person name="Kawakami T."/>
            <person name="Noguchi S."/>
            <person name="Itoh T."/>
            <person name="Shigeta K."/>
            <person name="Senba T."/>
            <person name="Matsumura K."/>
            <person name="Nakajima Y."/>
            <person name="Mizuno T."/>
            <person name="Morinaga M."/>
            <person name="Sasaki M."/>
            <person name="Togashi T."/>
            <person name="Oyama M."/>
            <person name="Hata H."/>
            <person name="Watanabe M."/>
            <person name="Komatsu T."/>
            <person name="Mizushima-Sugano J."/>
            <person name="Satoh T."/>
            <person name="Shirai Y."/>
            <person name="Takahashi Y."/>
            <person name="Nakagawa K."/>
            <person name="Okumura K."/>
            <person name="Nagase T."/>
            <person name="Nomura N."/>
            <person name="Kikuchi H."/>
            <person name="Masuho Y."/>
            <person name="Yamashita R."/>
            <person name="Nakai K."/>
            <person name="Yada T."/>
            <person name="Nakamura Y."/>
            <person name="Ohara O."/>
            <person name="Isogai T."/>
            <person name="Sugano S."/>
        </authorList>
    </citation>
    <scope>NUCLEOTIDE SEQUENCE [LARGE SCALE MRNA] (ISOFORMS 1 AND 2)</scope>
    <source>
        <tissue>Ovarian carcinoma</tissue>
        <tissue>Thalamus</tissue>
    </source>
</reference>
<reference key="5">
    <citation type="submission" date="2005-04" db="EMBL/GenBank/DDBJ databases">
        <authorList>
            <person name="Suzuki Y."/>
            <person name="Sugano S."/>
            <person name="Totoki Y."/>
            <person name="Toyoda A."/>
            <person name="Takeda T."/>
            <person name="Sakaki Y."/>
            <person name="Tanaka A."/>
            <person name="Yokoyama S."/>
        </authorList>
    </citation>
    <scope>NUCLEOTIDE SEQUENCE [LARGE SCALE MRNA] (ISOFORM 1)</scope>
    <source>
        <tissue>Adipose tissue</tissue>
    </source>
</reference>
<reference key="6">
    <citation type="journal article" date="2005" name="Nature">
        <title>Generation and annotation of the DNA sequences of human chromosomes 2 and 4.</title>
        <authorList>
            <person name="Hillier L.W."/>
            <person name="Graves T.A."/>
            <person name="Fulton R.S."/>
            <person name="Fulton L.A."/>
            <person name="Pepin K.H."/>
            <person name="Minx P."/>
            <person name="Wagner-McPherson C."/>
            <person name="Layman D."/>
            <person name="Wylie K."/>
            <person name="Sekhon M."/>
            <person name="Becker M.C."/>
            <person name="Fewell G.A."/>
            <person name="Delehaunty K.D."/>
            <person name="Miner T.L."/>
            <person name="Nash W.E."/>
            <person name="Kremitzki C."/>
            <person name="Oddy L."/>
            <person name="Du H."/>
            <person name="Sun H."/>
            <person name="Bradshaw-Cordum H."/>
            <person name="Ali J."/>
            <person name="Carter J."/>
            <person name="Cordes M."/>
            <person name="Harris A."/>
            <person name="Isak A."/>
            <person name="van Brunt A."/>
            <person name="Nguyen C."/>
            <person name="Du F."/>
            <person name="Courtney L."/>
            <person name="Kalicki J."/>
            <person name="Ozersky P."/>
            <person name="Abbott S."/>
            <person name="Armstrong J."/>
            <person name="Belter E.A."/>
            <person name="Caruso L."/>
            <person name="Cedroni M."/>
            <person name="Cotton M."/>
            <person name="Davidson T."/>
            <person name="Desai A."/>
            <person name="Elliott G."/>
            <person name="Erb T."/>
            <person name="Fronick C."/>
            <person name="Gaige T."/>
            <person name="Haakenson W."/>
            <person name="Haglund K."/>
            <person name="Holmes A."/>
            <person name="Harkins R."/>
            <person name="Kim K."/>
            <person name="Kruchowski S.S."/>
            <person name="Strong C.M."/>
            <person name="Grewal N."/>
            <person name="Goyea E."/>
            <person name="Hou S."/>
            <person name="Levy A."/>
            <person name="Martinka S."/>
            <person name="Mead K."/>
            <person name="McLellan M.D."/>
            <person name="Meyer R."/>
            <person name="Randall-Maher J."/>
            <person name="Tomlinson C."/>
            <person name="Dauphin-Kohlberg S."/>
            <person name="Kozlowicz-Reilly A."/>
            <person name="Shah N."/>
            <person name="Swearengen-Shahid S."/>
            <person name="Snider J."/>
            <person name="Strong J.T."/>
            <person name="Thompson J."/>
            <person name="Yoakum M."/>
            <person name="Leonard S."/>
            <person name="Pearman C."/>
            <person name="Trani L."/>
            <person name="Radionenko M."/>
            <person name="Waligorski J.E."/>
            <person name="Wang C."/>
            <person name="Rock S.M."/>
            <person name="Tin-Wollam A.-M."/>
            <person name="Maupin R."/>
            <person name="Latreille P."/>
            <person name="Wendl M.C."/>
            <person name="Yang S.-P."/>
            <person name="Pohl C."/>
            <person name="Wallis J.W."/>
            <person name="Spieth J."/>
            <person name="Bieri T.A."/>
            <person name="Berkowicz N."/>
            <person name="Nelson J.O."/>
            <person name="Osborne J."/>
            <person name="Ding L."/>
            <person name="Meyer R."/>
            <person name="Sabo A."/>
            <person name="Shotland Y."/>
            <person name="Sinha P."/>
            <person name="Wohldmann P.E."/>
            <person name="Cook L.L."/>
            <person name="Hickenbotham M.T."/>
            <person name="Eldred J."/>
            <person name="Williams D."/>
            <person name="Jones T.A."/>
            <person name="She X."/>
            <person name="Ciccarelli F.D."/>
            <person name="Izaurralde E."/>
            <person name="Taylor J."/>
            <person name="Schmutz J."/>
            <person name="Myers R.M."/>
            <person name="Cox D.R."/>
            <person name="Huang X."/>
            <person name="McPherson J.D."/>
            <person name="Mardis E.R."/>
            <person name="Clifton S.W."/>
            <person name="Warren W.C."/>
            <person name="Chinwalla A.T."/>
            <person name="Eddy S.R."/>
            <person name="Marra M.A."/>
            <person name="Ovcharenko I."/>
            <person name="Furey T.S."/>
            <person name="Miller W."/>
            <person name="Eichler E.E."/>
            <person name="Bork P."/>
            <person name="Suyama M."/>
            <person name="Torrents D."/>
            <person name="Waterston R.H."/>
            <person name="Wilson R.K."/>
        </authorList>
    </citation>
    <scope>NUCLEOTIDE SEQUENCE [LARGE SCALE GENOMIC DNA]</scope>
</reference>
<reference key="7">
    <citation type="submission" date="2005-09" db="EMBL/GenBank/DDBJ databases">
        <authorList>
            <person name="Mural R.J."/>
            <person name="Istrail S."/>
            <person name="Sutton G.G."/>
            <person name="Florea L."/>
            <person name="Halpern A.L."/>
            <person name="Mobarry C.M."/>
            <person name="Lippert R."/>
            <person name="Walenz B."/>
            <person name="Shatkay H."/>
            <person name="Dew I."/>
            <person name="Miller J.R."/>
            <person name="Flanigan M.J."/>
            <person name="Edwards N.J."/>
            <person name="Bolanos R."/>
            <person name="Fasulo D."/>
            <person name="Halldorsson B.V."/>
            <person name="Hannenhalli S."/>
            <person name="Turner R."/>
            <person name="Yooseph S."/>
            <person name="Lu F."/>
            <person name="Nusskern D.R."/>
            <person name="Shue B.C."/>
            <person name="Zheng X.H."/>
            <person name="Zhong F."/>
            <person name="Delcher A.L."/>
            <person name="Huson D.H."/>
            <person name="Kravitz S.A."/>
            <person name="Mouchard L."/>
            <person name="Reinert K."/>
            <person name="Remington K.A."/>
            <person name="Clark A.G."/>
            <person name="Waterman M.S."/>
            <person name="Eichler E.E."/>
            <person name="Adams M.D."/>
            <person name="Hunkapiller M.W."/>
            <person name="Myers E.W."/>
            <person name="Venter J.C."/>
        </authorList>
    </citation>
    <scope>NUCLEOTIDE SEQUENCE [LARGE SCALE GENOMIC DNA]</scope>
</reference>
<reference key="8">
    <citation type="journal article" date="2004" name="Genome Res.">
        <title>The status, quality, and expansion of the NIH full-length cDNA project: the Mammalian Gene Collection (MGC).</title>
        <authorList>
            <consortium name="The MGC Project Team"/>
        </authorList>
    </citation>
    <scope>NUCLEOTIDE SEQUENCE [LARGE SCALE MRNA] (ISOFORM 1)</scope>
    <source>
        <tissue>Placenta</tissue>
    </source>
</reference>
<reference key="9">
    <citation type="journal article" date="2009" name="Proc. Natl. Acad. Sci. U.S.A.">
        <title>Global profiling of protease cleavage sites by chemoselective labeling of protein N-termini.</title>
        <authorList>
            <person name="Xu G."/>
            <person name="Shin S.B."/>
            <person name="Jaffrey S.R."/>
        </authorList>
    </citation>
    <scope>PROTEIN SEQUENCE [LARGE SCALE ANALYSIS] OF 2-30</scope>
    <source>
        <tissue>Leukemic T-cell</tissue>
    </source>
</reference>
<reference key="10">
    <citation type="journal article" date="2001" name="J. Virol.">
        <title>Identification of a hepatic factor capable of supporting hepatitis C virus replication in a nonpermissive cell line.</title>
        <authorList>
            <person name="Yeh C.-T."/>
            <person name="Lai H.-Y."/>
            <person name="Chen T.-C."/>
            <person name="Chu C.-M."/>
            <person name="Liaw Y.-F."/>
        </authorList>
    </citation>
    <scope>NUCLEOTIDE SEQUENCE [MRNA] OF 50-179</scope>
    <scope>FUNCTION</scope>
    <scope>SUBCELLULAR LOCATION</scope>
    <scope>TISSUE SPECIFICITY</scope>
    <source>
        <tissue>Liver</tissue>
    </source>
</reference>
<reference key="11">
    <citation type="journal article" date="2005" name="Genes Cells">
        <title>Membrane-type 1 matrix metalloproteinase cytoplasmic tail binding protein-1 (MTCBP-1) acts as an eukaryotic aci-reductone dioxygenase (ARD) in the methionine salvage pathway.</title>
        <authorList>
            <person name="Hirano W."/>
            <person name="Gotoh I."/>
            <person name="Uekita T."/>
            <person name="Seiki M."/>
        </authorList>
    </citation>
    <scope>FUNCTION</scope>
    <scope>CATALYTIC ACTIVITY</scope>
    <scope>MUTAGENESIS OF GLU-94</scope>
</reference>
<reference key="12">
    <citation type="journal article" date="2011" name="BMC Syst. Biol.">
        <title>Initial characterization of the human central proteome.</title>
        <authorList>
            <person name="Burkard T.R."/>
            <person name="Planyavsky M."/>
            <person name="Kaupe I."/>
            <person name="Breitwieser F.P."/>
            <person name="Buerckstuemmer T."/>
            <person name="Bennett K.L."/>
            <person name="Superti-Furga G."/>
            <person name="Colinge J."/>
        </authorList>
    </citation>
    <scope>IDENTIFICATION BY MASS SPECTROMETRY [LARGE SCALE ANALYSIS]</scope>
</reference>
<reference key="13">
    <citation type="journal article" date="2014" name="J. Proteomics">
        <title>An enzyme assisted RP-RPLC approach for in-depth analysis of human liver phosphoproteome.</title>
        <authorList>
            <person name="Bian Y."/>
            <person name="Song C."/>
            <person name="Cheng K."/>
            <person name="Dong M."/>
            <person name="Wang F."/>
            <person name="Huang J."/>
            <person name="Sun D."/>
            <person name="Wang L."/>
            <person name="Ye M."/>
            <person name="Zou H."/>
        </authorList>
    </citation>
    <scope>IDENTIFICATION BY MASS SPECTROMETRY [LARGE SCALE ANALYSIS]</scope>
    <source>
        <tissue>Liver</tissue>
    </source>
</reference>
<reference evidence="12" key="14">
    <citation type="submission" date="2014-05" db="PDB data bank">
        <title>Human acireductone dioxygenase with iron ion and L-methionine in active center.</title>
        <authorList>
            <person name="Milaczewska A.M."/>
            <person name="Chruszcz M."/>
            <person name="Petkowski J.J."/>
            <person name="Niedzialkowska E."/>
            <person name="Minor W."/>
            <person name="Borowski T."/>
        </authorList>
    </citation>
    <scope>X-RAY CRYSTALLOGRAPHY (3.05 ANGSTROMS) IN COMPLEX WITH IRON</scope>
    <scope>COFACTOR</scope>
</reference>
<name>MTND_HUMAN</name>
<proteinExistence type="evidence at protein level"/>
<gene>
    <name evidence="2" type="primary">ADI1</name>
    <name evidence="2" type="synonym">MTCBP1</name>
    <name type="ORF">HMFT1638</name>
</gene>
<dbReference type="EC" id="1.13.11.54" evidence="6"/>
<dbReference type="EC" id="1.13.11.53" evidence="2"/>
<dbReference type="EMBL" id="AB158319">
    <property type="protein sequence ID" value="BAD10866.1"/>
    <property type="molecule type" value="mRNA"/>
</dbReference>
<dbReference type="EMBL" id="AF087863">
    <property type="protein sequence ID" value="AAP97173.1"/>
    <property type="molecule type" value="mRNA"/>
</dbReference>
<dbReference type="EMBL" id="AB073609">
    <property type="protein sequence ID" value="BAD38646.1"/>
    <property type="status" value="ALT_INIT"/>
    <property type="molecule type" value="mRNA"/>
</dbReference>
<dbReference type="EMBL" id="AK001775">
    <property type="protein sequence ID" value="BAA91901.1"/>
    <property type="molecule type" value="mRNA"/>
</dbReference>
<dbReference type="EMBL" id="AK127473">
    <property type="protein sequence ID" value="BAC86996.1"/>
    <property type="molecule type" value="mRNA"/>
</dbReference>
<dbReference type="EMBL" id="AK222467">
    <property type="protein sequence ID" value="BAD96187.1"/>
    <property type="status" value="ALT_INIT"/>
    <property type="molecule type" value="mRNA"/>
</dbReference>
<dbReference type="EMBL" id="AC142528">
    <property type="protein sequence ID" value="AAX82038.1"/>
    <property type="molecule type" value="Genomic_DNA"/>
</dbReference>
<dbReference type="EMBL" id="AC114810">
    <property type="protein sequence ID" value="AAY24022.1"/>
    <property type="molecule type" value="Genomic_DNA"/>
</dbReference>
<dbReference type="EMBL" id="CH471053">
    <property type="protein sequence ID" value="EAX01064.1"/>
    <property type="molecule type" value="Genomic_DNA"/>
</dbReference>
<dbReference type="EMBL" id="CH471053">
    <property type="protein sequence ID" value="EAX01065.1"/>
    <property type="molecule type" value="Genomic_DNA"/>
</dbReference>
<dbReference type="EMBL" id="BC001467">
    <property type="protein sequence ID" value="AAH01467.1"/>
    <property type="molecule type" value="mRNA"/>
</dbReference>
<dbReference type="EMBL" id="AF403478">
    <property type="protein sequence ID" value="AAL25800.1"/>
    <property type="status" value="ALT_INIT"/>
    <property type="molecule type" value="mRNA"/>
</dbReference>
<dbReference type="CCDS" id="CCDS1653.1">
    <molecule id="Q9BV57-1"/>
</dbReference>
<dbReference type="CCDS" id="CCDS77380.1">
    <molecule id="Q9BV57-2"/>
</dbReference>
<dbReference type="RefSeq" id="NP_001293006.1">
    <molecule id="Q9BV57-2"/>
    <property type="nucleotide sequence ID" value="NM_001306077.2"/>
</dbReference>
<dbReference type="RefSeq" id="NP_060739.2">
    <molecule id="Q9BV57-1"/>
    <property type="nucleotide sequence ID" value="NM_018269.4"/>
</dbReference>
<dbReference type="PDB" id="4QGN">
    <property type="method" value="X-ray"/>
    <property type="resolution" value="3.05 A"/>
    <property type="chains" value="A=1-179"/>
</dbReference>
<dbReference type="PDB" id="7JXG">
    <property type="method" value="NMR"/>
    <property type="chains" value="A=1-179"/>
</dbReference>
<dbReference type="PDBsum" id="4QGN"/>
<dbReference type="PDBsum" id="7JXG"/>
<dbReference type="SMR" id="Q9BV57"/>
<dbReference type="BioGRID" id="120547">
    <property type="interactions" value="45"/>
</dbReference>
<dbReference type="FunCoup" id="Q9BV57">
    <property type="interactions" value="1662"/>
</dbReference>
<dbReference type="IntAct" id="Q9BV57">
    <property type="interactions" value="12"/>
</dbReference>
<dbReference type="STRING" id="9606.ENSP00000333666"/>
<dbReference type="ChEMBL" id="CHEMBL3817720"/>
<dbReference type="GlyGen" id="Q9BV57">
    <property type="glycosylation" value="2 sites, 1 N-linked glycan (1 site), 1 O-linked glycan (1 site)"/>
</dbReference>
<dbReference type="iPTMnet" id="Q9BV57"/>
<dbReference type="MetOSite" id="Q9BV57"/>
<dbReference type="PhosphoSitePlus" id="Q9BV57"/>
<dbReference type="BioMuta" id="ADI1"/>
<dbReference type="DMDM" id="74733289"/>
<dbReference type="jPOST" id="Q9BV57"/>
<dbReference type="MassIVE" id="Q9BV57"/>
<dbReference type="PaxDb" id="9606-ENSP00000333666"/>
<dbReference type="PeptideAtlas" id="Q9BV57"/>
<dbReference type="ProteomicsDB" id="79171">
    <molecule id="Q9BV57-1"/>
</dbReference>
<dbReference type="ProteomicsDB" id="79172">
    <molecule id="Q9BV57-2"/>
</dbReference>
<dbReference type="Pumba" id="Q9BV57"/>
<dbReference type="TopDownProteomics" id="Q9BV57-1">
    <molecule id="Q9BV57-1"/>
</dbReference>
<dbReference type="TopDownProteomics" id="Q9BV57-2">
    <molecule id="Q9BV57-2"/>
</dbReference>
<dbReference type="Antibodypedia" id="26318">
    <property type="antibodies" value="316 antibodies from 29 providers"/>
</dbReference>
<dbReference type="DNASU" id="55256"/>
<dbReference type="Ensembl" id="ENST00000327435.11">
    <molecule id="Q9BV57-1"/>
    <property type="protein sequence ID" value="ENSP00000333666.3"/>
    <property type="gene ID" value="ENSG00000182551.14"/>
</dbReference>
<dbReference type="Ensembl" id="ENST00000382093.5">
    <molecule id="Q9BV57-2"/>
    <property type="protein sequence ID" value="ENSP00000371525.5"/>
    <property type="gene ID" value="ENSG00000182551.14"/>
</dbReference>
<dbReference type="GeneID" id="55256"/>
<dbReference type="KEGG" id="hsa:55256"/>
<dbReference type="MANE-Select" id="ENST00000327435.11">
    <property type="protein sequence ID" value="ENSP00000333666.3"/>
    <property type="RefSeq nucleotide sequence ID" value="NM_018269.4"/>
    <property type="RefSeq protein sequence ID" value="NP_060739.2"/>
</dbReference>
<dbReference type="UCSC" id="uc002qxp.5">
    <molecule id="Q9BV57-1"/>
    <property type="organism name" value="human"/>
</dbReference>
<dbReference type="AGR" id="HGNC:30576"/>
<dbReference type="CTD" id="55256"/>
<dbReference type="DisGeNET" id="55256"/>
<dbReference type="GeneCards" id="ADI1"/>
<dbReference type="HGNC" id="HGNC:30576">
    <property type="gene designation" value="ADI1"/>
</dbReference>
<dbReference type="HPA" id="ENSG00000182551">
    <property type="expression patterns" value="Tissue enhanced (liver)"/>
</dbReference>
<dbReference type="MIM" id="613400">
    <property type="type" value="gene"/>
</dbReference>
<dbReference type="neXtProt" id="NX_Q9BV57"/>
<dbReference type="OpenTargets" id="ENSG00000182551"/>
<dbReference type="PharmGKB" id="PA143485291"/>
<dbReference type="VEuPathDB" id="HostDB:ENSG00000182551"/>
<dbReference type="eggNOG" id="KOG2107">
    <property type="taxonomic scope" value="Eukaryota"/>
</dbReference>
<dbReference type="GeneTree" id="ENSGT00390000008195"/>
<dbReference type="HOGENOM" id="CLU_090154_0_1_1"/>
<dbReference type="InParanoid" id="Q9BV57"/>
<dbReference type="OMA" id="WYMDESQ"/>
<dbReference type="OrthoDB" id="1867259at2759"/>
<dbReference type="PAN-GO" id="Q9BV57">
    <property type="GO annotations" value="2 GO annotations based on evolutionary models"/>
</dbReference>
<dbReference type="PhylomeDB" id="Q9BV57"/>
<dbReference type="TreeFam" id="TF300231"/>
<dbReference type="BRENDA" id="1.13.11.53">
    <property type="organism ID" value="2681"/>
</dbReference>
<dbReference type="BRENDA" id="1.13.11.54">
    <property type="organism ID" value="2681"/>
</dbReference>
<dbReference type="PathwayCommons" id="Q9BV57"/>
<dbReference type="Reactome" id="R-HSA-1237112">
    <property type="pathway name" value="Methionine salvage pathway"/>
</dbReference>
<dbReference type="SignaLink" id="Q9BV57"/>
<dbReference type="UniPathway" id="UPA00904">
    <property type="reaction ID" value="UER00878"/>
</dbReference>
<dbReference type="BioGRID-ORCS" id="55256">
    <property type="hits" value="12 hits in 1164 CRISPR screens"/>
</dbReference>
<dbReference type="ChiTaRS" id="ADI1">
    <property type="organism name" value="human"/>
</dbReference>
<dbReference type="EvolutionaryTrace" id="Q9BV57"/>
<dbReference type="GeneWiki" id="ADI1"/>
<dbReference type="GenomeRNAi" id="55256"/>
<dbReference type="Pharos" id="Q9BV57">
    <property type="development level" value="Tbio"/>
</dbReference>
<dbReference type="PRO" id="PR:Q9BV57"/>
<dbReference type="Proteomes" id="UP000005640">
    <property type="component" value="Chromosome 2"/>
</dbReference>
<dbReference type="RNAct" id="Q9BV57">
    <property type="molecule type" value="protein"/>
</dbReference>
<dbReference type="Bgee" id="ENSG00000182551">
    <property type="expression patterns" value="Expressed in right lobe of liver and 98 other cell types or tissues"/>
</dbReference>
<dbReference type="ExpressionAtlas" id="Q9BV57">
    <property type="expression patterns" value="baseline and differential"/>
</dbReference>
<dbReference type="GO" id="GO:0005737">
    <property type="term" value="C:cytoplasm"/>
    <property type="evidence" value="ECO:0000314"/>
    <property type="project" value="UniProtKB"/>
</dbReference>
<dbReference type="GO" id="GO:0005829">
    <property type="term" value="C:cytosol"/>
    <property type="evidence" value="ECO:0000304"/>
    <property type="project" value="Reactome"/>
</dbReference>
<dbReference type="GO" id="GO:0005634">
    <property type="term" value="C:nucleus"/>
    <property type="evidence" value="ECO:0000314"/>
    <property type="project" value="UniProtKB"/>
</dbReference>
<dbReference type="GO" id="GO:0005886">
    <property type="term" value="C:plasma membrane"/>
    <property type="evidence" value="ECO:0000314"/>
    <property type="project" value="UniProtKB"/>
</dbReference>
<dbReference type="GO" id="GO:0010308">
    <property type="term" value="F:acireductone dioxygenase (Ni2+-requiring) activity"/>
    <property type="evidence" value="ECO:0007669"/>
    <property type="project" value="UniProtKB-UniRule"/>
</dbReference>
<dbReference type="GO" id="GO:0010309">
    <property type="term" value="F:acireductone dioxygenase [iron(II)-requiring] activity"/>
    <property type="evidence" value="ECO:0000318"/>
    <property type="project" value="GO_Central"/>
</dbReference>
<dbReference type="GO" id="GO:0005506">
    <property type="term" value="F:iron ion binding"/>
    <property type="evidence" value="ECO:0007669"/>
    <property type="project" value="UniProtKB-UniRule"/>
</dbReference>
<dbReference type="GO" id="GO:0016151">
    <property type="term" value="F:nickel cation binding"/>
    <property type="evidence" value="ECO:0007669"/>
    <property type="project" value="UniProtKB-UniRule"/>
</dbReference>
<dbReference type="GO" id="GO:0016491">
    <property type="term" value="F:oxidoreductase activity"/>
    <property type="evidence" value="ECO:0000314"/>
    <property type="project" value="UniProtKB"/>
</dbReference>
<dbReference type="GO" id="GO:0019509">
    <property type="term" value="P:L-methionine salvage from methylthioadenosine"/>
    <property type="evidence" value="ECO:0000314"/>
    <property type="project" value="UniProtKB"/>
</dbReference>
<dbReference type="GO" id="GO:0006555">
    <property type="term" value="P:methionine metabolic process"/>
    <property type="evidence" value="ECO:0000318"/>
    <property type="project" value="GO_Central"/>
</dbReference>
<dbReference type="CDD" id="cd02232">
    <property type="entry name" value="cupin_ARD"/>
    <property type="match status" value="1"/>
</dbReference>
<dbReference type="FunFam" id="2.60.120.10:FF:000031">
    <property type="entry name" value="1,2-dihydroxy-3-keto-5-methylthiopentene dioxygenase"/>
    <property type="match status" value="1"/>
</dbReference>
<dbReference type="Gene3D" id="2.60.120.10">
    <property type="entry name" value="Jelly Rolls"/>
    <property type="match status" value="1"/>
</dbReference>
<dbReference type="HAMAP" id="MF_03154">
    <property type="entry name" value="Salvage_MtnD_euk"/>
    <property type="match status" value="1"/>
</dbReference>
<dbReference type="InterPro" id="IPR004313">
    <property type="entry name" value="ARD"/>
</dbReference>
<dbReference type="InterPro" id="IPR027496">
    <property type="entry name" value="ARD_euk"/>
</dbReference>
<dbReference type="InterPro" id="IPR014710">
    <property type="entry name" value="RmlC-like_jellyroll"/>
</dbReference>
<dbReference type="InterPro" id="IPR011051">
    <property type="entry name" value="RmlC_Cupin_sf"/>
</dbReference>
<dbReference type="PANTHER" id="PTHR23418">
    <property type="entry name" value="ACIREDUCTONE DIOXYGENASE"/>
    <property type="match status" value="1"/>
</dbReference>
<dbReference type="PANTHER" id="PTHR23418:SF0">
    <property type="entry name" value="ACIREDUCTONE DIOXYGENASE"/>
    <property type="match status" value="1"/>
</dbReference>
<dbReference type="Pfam" id="PF03079">
    <property type="entry name" value="ARD"/>
    <property type="match status" value="1"/>
</dbReference>
<dbReference type="SUPFAM" id="SSF51182">
    <property type="entry name" value="RmlC-like cupins"/>
    <property type="match status" value="1"/>
</dbReference>
<protein>
    <recommendedName>
        <fullName evidence="2">Acireductone dioxygenase</fullName>
    </recommendedName>
    <alternativeName>
        <fullName evidence="2">Acireductone dioxygenase (Fe(2+)-requiring)</fullName>
        <shortName evidence="2">ARD'</shortName>
        <shortName evidence="2">Fe-ARD</shortName>
        <ecNumber evidence="6">1.13.11.54</ecNumber>
    </alternativeName>
    <alternativeName>
        <fullName evidence="2">Acireductone dioxygenase (Ni(2+)-requiring)</fullName>
        <shortName evidence="2">ARD</shortName>
        <shortName evidence="2">Ni-ARD</shortName>
        <ecNumber evidence="2">1.13.11.53</ecNumber>
    </alternativeName>
    <alternativeName>
        <fullName evidence="2">Membrane-type 1 matrix metalloproteinase cytoplasmic tail-binding protein 1</fullName>
        <shortName evidence="2">MTCBP-1</shortName>
    </alternativeName>
    <alternativeName>
        <fullName evidence="10">Submergence-induced protein-like factor</fullName>
        <shortName evidence="10">Sip-L</shortName>
    </alternativeName>
</protein>
<comment type="function">
    <text evidence="2 4 5 6">Catalyzes 2 different reactions between oxygen and the acireductone 1,2-dihydroxy-3-keto-5-methylthiopentene (DHK-MTPene) depending upon the metal bound in the active site (By similarity). Fe-containing acireductone dioxygenase (Fe-ARD) produces formate and 2-keto-4-methylthiobutyrate (KMTB), the alpha-ketoacid precursor of methionine in the methionine recycle pathway (PubMed:15938715). Ni-containing acireductone dioxygenase (Ni-ARD) produces methylthiopropionate, carbon monoxide and formate, and does not lie on the methionine recycle pathway (By similarity). Also down-regulates cell migration mediated by MMP14 (PubMed:14718544). Necessary for hepatitis C virus replication in an otherwise non-permissive cell line (PubMed:11602742).</text>
</comment>
<comment type="catalytic activity">
    <reaction evidence="6">
        <text>1,2-dihydroxy-5-(methylsulfanyl)pent-1-en-3-one + O2 = 4-methylsulfanyl-2-oxobutanoate + formate + 2 H(+)</text>
        <dbReference type="Rhea" id="RHEA:24504"/>
        <dbReference type="ChEBI" id="CHEBI:15378"/>
        <dbReference type="ChEBI" id="CHEBI:15379"/>
        <dbReference type="ChEBI" id="CHEBI:15740"/>
        <dbReference type="ChEBI" id="CHEBI:16723"/>
        <dbReference type="ChEBI" id="CHEBI:49252"/>
        <dbReference type="EC" id="1.13.11.54"/>
    </reaction>
</comment>
<comment type="catalytic activity">
    <reaction evidence="2">
        <text>1,2-dihydroxy-5-(methylsulfanyl)pent-1-en-3-one + O2 = 3-(methylsulfanyl)propanoate + CO + formate + 2 H(+)</text>
        <dbReference type="Rhea" id="RHEA:14161"/>
        <dbReference type="ChEBI" id="CHEBI:15378"/>
        <dbReference type="ChEBI" id="CHEBI:15379"/>
        <dbReference type="ChEBI" id="CHEBI:15740"/>
        <dbReference type="ChEBI" id="CHEBI:17245"/>
        <dbReference type="ChEBI" id="CHEBI:49016"/>
        <dbReference type="ChEBI" id="CHEBI:49252"/>
        <dbReference type="EC" id="1.13.11.53"/>
    </reaction>
</comment>
<comment type="cofactor">
    <cofactor evidence="7">
        <name>Fe(2+)</name>
        <dbReference type="ChEBI" id="CHEBI:29033"/>
    </cofactor>
    <cofactor evidence="1">
        <name>Ni(2+)</name>
        <dbReference type="ChEBI" id="CHEBI:49786"/>
    </cofactor>
    <text evidence="1">Binds either 1 Fe or Ni cation per monomer. Iron-binding promotes an acireductone dioxygenase reaction producing 2-keto-4-methylthiobutyrate, while nickel-binding promotes an acireductone dioxygenase reaction producing 3-(methylsulfanyl)propanoate.</text>
</comment>
<comment type="pathway">
    <text evidence="2">Amino-acid biosynthesis; L-methionine biosynthesis via salvage pathway; L-methionine from S-methyl-5-thio-alpha-D-ribose 1-phosphate: step 5/6.</text>
</comment>
<comment type="subunit">
    <text evidence="2 5">Monomer (By similarity). Interacts with MMP14.</text>
</comment>
<comment type="interaction">
    <interactant intactId="EBI-992807">
        <id>Q9BV57</id>
    </interactant>
    <interactant intactId="EBI-741243">
        <id>Q9UKG1</id>
        <label>APPL1</label>
    </interactant>
    <organismsDiffer>false</organismsDiffer>
    <experiments>3</experiments>
</comment>
<comment type="interaction">
    <interactant intactId="EBI-992807">
        <id>Q9BV57</id>
    </interactant>
    <interactant intactId="EBI-992788">
        <id>P50281</id>
        <label>MMP14</label>
    </interactant>
    <organismsDiffer>false</organismsDiffer>
    <experiments>4</experiments>
</comment>
<comment type="subcellular location">
    <subcellularLocation>
        <location evidence="9">Cytoplasm</location>
    </subcellularLocation>
    <subcellularLocation>
        <location evidence="9">Nucleus</location>
    </subcellularLocation>
    <subcellularLocation>
        <location evidence="9">Cell membrane</location>
        <topology evidence="9">Peripheral membrane protein</topology>
        <orientation evidence="9">Cytoplasmic side</orientation>
    </subcellularLocation>
    <text evidence="9">Localizes to the plasma membrane when complexed to MMP14.</text>
</comment>
<comment type="alternative products">
    <event type="alternative splicing"/>
    <isoform>
        <id>Q9BV57-1</id>
        <name>1</name>
        <sequence type="displayed"/>
    </isoform>
    <isoform>
        <id>Q9BV57-2</id>
        <name>2</name>
        <sequence type="described" ref="VSP_015822"/>
    </isoform>
</comment>
<comment type="tissue specificity">
    <text evidence="4 5">Detected in heart, colon, lung, stomach, brain, spleen, liver, skeletal muscle and kidney.</text>
</comment>
<comment type="similarity">
    <text evidence="2">Belongs to the acireductone dioxygenase (ARD) family.</text>
</comment>
<comment type="sequence caution" evidence="11">
    <conflict type="erroneous initiation">
        <sequence resource="EMBL-CDS" id="AAL25800"/>
    </conflict>
    <text>Truncated N-terminus.</text>
</comment>
<comment type="sequence caution" evidence="11">
    <conflict type="erroneous initiation">
        <sequence resource="EMBL-CDS" id="BAD38646"/>
    </conflict>
    <text>Extended N-terminus.</text>
</comment>
<comment type="sequence caution" evidence="11">
    <conflict type="erroneous initiation">
        <sequence resource="EMBL-CDS" id="BAD96187"/>
    </conflict>
    <text>Extended N-terminus.</text>
</comment>
<organism>
    <name type="scientific">Homo sapiens</name>
    <name type="common">Human</name>
    <dbReference type="NCBI Taxonomy" id="9606"/>
    <lineage>
        <taxon>Eukaryota</taxon>
        <taxon>Metazoa</taxon>
        <taxon>Chordata</taxon>
        <taxon>Craniata</taxon>
        <taxon>Vertebrata</taxon>
        <taxon>Euteleostomi</taxon>
        <taxon>Mammalia</taxon>
        <taxon>Eutheria</taxon>
        <taxon>Euarchontoglires</taxon>
        <taxon>Primates</taxon>
        <taxon>Haplorrhini</taxon>
        <taxon>Catarrhini</taxon>
        <taxon>Hominidae</taxon>
        <taxon>Homo</taxon>
    </lineage>
</organism>